<comment type="function">
    <text evidence="1">Cleaves peptides in various proteins in a process that requires ATP hydrolysis. Has a chymotrypsin-like activity. Plays a major role in the degradation of misfolded proteins.</text>
</comment>
<comment type="catalytic activity">
    <reaction evidence="1">
        <text>Hydrolysis of proteins to small peptides in the presence of ATP and magnesium. alpha-casein is the usual test substrate. In the absence of ATP, only oligopeptides shorter than five residues are hydrolyzed (such as succinyl-Leu-Tyr-|-NHMec, and Leu-Tyr-Leu-|-Tyr-Trp, in which cleavage of the -Tyr-|-Leu- and -Tyr-|-Trp bonds also occurs).</text>
        <dbReference type="EC" id="3.4.21.92"/>
    </reaction>
</comment>
<comment type="subunit">
    <text evidence="1">Fourteen ClpP subunits assemble into 2 heptameric rings which stack back to back to give a disk-like structure with a central cavity, resembling the structure of eukaryotic proteasomes.</text>
</comment>
<comment type="subcellular location">
    <subcellularLocation>
        <location evidence="1">Cytoplasm</location>
    </subcellularLocation>
</comment>
<comment type="similarity">
    <text evidence="1">Belongs to the peptidase S14 family.</text>
</comment>
<feature type="chain" id="PRO_0000179524" description="ATP-dependent Clp protease proteolytic subunit">
    <location>
        <begin position="1"/>
        <end position="194"/>
    </location>
</feature>
<feature type="active site" description="Nucleophile" evidence="1">
    <location>
        <position position="97"/>
    </location>
</feature>
<feature type="active site" evidence="1">
    <location>
        <position position="122"/>
    </location>
</feature>
<reference key="1">
    <citation type="journal article" date="2000" name="Nature">
        <title>The genome sequence of the food-borne pathogen Campylobacter jejuni reveals hypervariable sequences.</title>
        <authorList>
            <person name="Parkhill J."/>
            <person name="Wren B.W."/>
            <person name="Mungall K.L."/>
            <person name="Ketley J.M."/>
            <person name="Churcher C.M."/>
            <person name="Basham D."/>
            <person name="Chillingworth T."/>
            <person name="Davies R.M."/>
            <person name="Feltwell T."/>
            <person name="Holroyd S."/>
            <person name="Jagels K."/>
            <person name="Karlyshev A.V."/>
            <person name="Moule S."/>
            <person name="Pallen M.J."/>
            <person name="Penn C.W."/>
            <person name="Quail M.A."/>
            <person name="Rajandream M.A."/>
            <person name="Rutherford K.M."/>
            <person name="van Vliet A.H.M."/>
            <person name="Whitehead S."/>
            <person name="Barrell B.G."/>
        </authorList>
    </citation>
    <scope>NUCLEOTIDE SEQUENCE [LARGE SCALE GENOMIC DNA]</scope>
    <source>
        <strain>ATCC 700819 / NCTC 11168</strain>
    </source>
</reference>
<reference key="2">
    <citation type="journal article" date="1995" name="Microbiology">
        <title>The gene for Campylobacter trigger factor: evidence for multiple transcription start sites and protein products.</title>
        <authorList>
            <person name="Griffiths P.L."/>
            <person name="Park R.W.A."/>
            <person name="Connerton I.F."/>
        </authorList>
    </citation>
    <scope>NUCLEOTIDE SEQUENCE [GENOMIC DNA] OF 1-49</scope>
    <source>
        <strain>ATCC 700819 / NCTC 11168</strain>
    </source>
</reference>
<evidence type="ECO:0000255" key="1">
    <source>
        <dbReference type="HAMAP-Rule" id="MF_00444"/>
    </source>
</evidence>
<protein>
    <recommendedName>
        <fullName evidence="1">ATP-dependent Clp protease proteolytic subunit</fullName>
        <ecNumber evidence="1">3.4.21.92</ecNumber>
    </recommendedName>
    <alternativeName>
        <fullName evidence="1">Endopeptidase Clp</fullName>
    </alternativeName>
</protein>
<name>CLPP_CAMJE</name>
<gene>
    <name evidence="1" type="primary">clpP</name>
    <name type="ordered locus">Cj0192c</name>
</gene>
<organism>
    <name type="scientific">Campylobacter jejuni subsp. jejuni serotype O:2 (strain ATCC 700819 / NCTC 11168)</name>
    <dbReference type="NCBI Taxonomy" id="192222"/>
    <lineage>
        <taxon>Bacteria</taxon>
        <taxon>Pseudomonadati</taxon>
        <taxon>Campylobacterota</taxon>
        <taxon>Epsilonproteobacteria</taxon>
        <taxon>Campylobacterales</taxon>
        <taxon>Campylobacteraceae</taxon>
        <taxon>Campylobacter</taxon>
    </lineage>
</organism>
<accession>P54413</accession>
<accession>Q0PBU7</accession>
<accession>Q9PIT7</accession>
<dbReference type="EC" id="3.4.21.92" evidence="1"/>
<dbReference type="EMBL" id="AL111168">
    <property type="protein sequence ID" value="CAL34361.1"/>
    <property type="molecule type" value="Genomic_DNA"/>
</dbReference>
<dbReference type="EMBL" id="X85954">
    <property type="protein sequence ID" value="CAA59932.1"/>
    <property type="molecule type" value="Genomic_DNA"/>
</dbReference>
<dbReference type="PIR" id="G81437">
    <property type="entry name" value="G81437"/>
</dbReference>
<dbReference type="RefSeq" id="WP_002806309.1">
    <property type="nucleotide sequence ID" value="NZ_SZUC01000006.1"/>
</dbReference>
<dbReference type="RefSeq" id="YP_002343650.1">
    <property type="nucleotide sequence ID" value="NC_002163.1"/>
</dbReference>
<dbReference type="SMR" id="P54413"/>
<dbReference type="IntAct" id="P54413">
    <property type="interactions" value="97"/>
</dbReference>
<dbReference type="STRING" id="192222.Cj0192c"/>
<dbReference type="MEROPS" id="S14.001"/>
<dbReference type="PaxDb" id="192222-Cj0192c"/>
<dbReference type="EnsemblBacteria" id="CAL34361">
    <property type="protein sequence ID" value="CAL34361"/>
    <property type="gene ID" value="Cj0192c"/>
</dbReference>
<dbReference type="GeneID" id="906014"/>
<dbReference type="KEGG" id="cje:Cj0192c"/>
<dbReference type="PATRIC" id="fig|192222.6.peg.189"/>
<dbReference type="eggNOG" id="COG0740">
    <property type="taxonomic scope" value="Bacteria"/>
</dbReference>
<dbReference type="HOGENOM" id="CLU_058707_3_2_7"/>
<dbReference type="OrthoDB" id="9802800at2"/>
<dbReference type="Proteomes" id="UP000000799">
    <property type="component" value="Chromosome"/>
</dbReference>
<dbReference type="GO" id="GO:0005737">
    <property type="term" value="C:cytoplasm"/>
    <property type="evidence" value="ECO:0007669"/>
    <property type="project" value="UniProtKB-SubCell"/>
</dbReference>
<dbReference type="GO" id="GO:0009368">
    <property type="term" value="C:endopeptidase Clp complex"/>
    <property type="evidence" value="ECO:0007669"/>
    <property type="project" value="TreeGrafter"/>
</dbReference>
<dbReference type="GO" id="GO:0004176">
    <property type="term" value="F:ATP-dependent peptidase activity"/>
    <property type="evidence" value="ECO:0007669"/>
    <property type="project" value="InterPro"/>
</dbReference>
<dbReference type="GO" id="GO:0051117">
    <property type="term" value="F:ATPase binding"/>
    <property type="evidence" value="ECO:0007669"/>
    <property type="project" value="TreeGrafter"/>
</dbReference>
<dbReference type="GO" id="GO:0004252">
    <property type="term" value="F:serine-type endopeptidase activity"/>
    <property type="evidence" value="ECO:0007669"/>
    <property type="project" value="UniProtKB-UniRule"/>
</dbReference>
<dbReference type="GO" id="GO:0006515">
    <property type="term" value="P:protein quality control for misfolded or incompletely synthesized proteins"/>
    <property type="evidence" value="ECO:0007669"/>
    <property type="project" value="TreeGrafter"/>
</dbReference>
<dbReference type="CDD" id="cd07017">
    <property type="entry name" value="S14_ClpP_2"/>
    <property type="match status" value="1"/>
</dbReference>
<dbReference type="FunFam" id="3.90.226.10:FF:000001">
    <property type="entry name" value="ATP-dependent Clp protease proteolytic subunit"/>
    <property type="match status" value="1"/>
</dbReference>
<dbReference type="Gene3D" id="3.90.226.10">
    <property type="entry name" value="2-enoyl-CoA Hydratase, Chain A, domain 1"/>
    <property type="match status" value="1"/>
</dbReference>
<dbReference type="HAMAP" id="MF_00444">
    <property type="entry name" value="ClpP"/>
    <property type="match status" value="1"/>
</dbReference>
<dbReference type="InterPro" id="IPR001907">
    <property type="entry name" value="ClpP"/>
</dbReference>
<dbReference type="InterPro" id="IPR029045">
    <property type="entry name" value="ClpP/crotonase-like_dom_sf"/>
</dbReference>
<dbReference type="InterPro" id="IPR023562">
    <property type="entry name" value="ClpP/TepA"/>
</dbReference>
<dbReference type="InterPro" id="IPR033135">
    <property type="entry name" value="ClpP_His_AS"/>
</dbReference>
<dbReference type="InterPro" id="IPR018215">
    <property type="entry name" value="ClpP_Ser_AS"/>
</dbReference>
<dbReference type="NCBIfam" id="TIGR00493">
    <property type="entry name" value="clpP"/>
    <property type="match status" value="1"/>
</dbReference>
<dbReference type="NCBIfam" id="NF001368">
    <property type="entry name" value="PRK00277.1"/>
    <property type="match status" value="1"/>
</dbReference>
<dbReference type="NCBIfam" id="NF009205">
    <property type="entry name" value="PRK12553.1"/>
    <property type="match status" value="1"/>
</dbReference>
<dbReference type="PANTHER" id="PTHR10381">
    <property type="entry name" value="ATP-DEPENDENT CLP PROTEASE PROTEOLYTIC SUBUNIT"/>
    <property type="match status" value="1"/>
</dbReference>
<dbReference type="PANTHER" id="PTHR10381:SF70">
    <property type="entry name" value="ATP-DEPENDENT CLP PROTEASE PROTEOLYTIC SUBUNIT"/>
    <property type="match status" value="1"/>
</dbReference>
<dbReference type="Pfam" id="PF00574">
    <property type="entry name" value="CLP_protease"/>
    <property type="match status" value="1"/>
</dbReference>
<dbReference type="PRINTS" id="PR00127">
    <property type="entry name" value="CLPPROTEASEP"/>
</dbReference>
<dbReference type="SUPFAM" id="SSF52096">
    <property type="entry name" value="ClpP/crotonase"/>
    <property type="match status" value="1"/>
</dbReference>
<dbReference type="PROSITE" id="PS00382">
    <property type="entry name" value="CLP_PROTEASE_HIS"/>
    <property type="match status" value="1"/>
</dbReference>
<dbReference type="PROSITE" id="PS00381">
    <property type="entry name" value="CLP_PROTEASE_SER"/>
    <property type="match status" value="1"/>
</dbReference>
<keyword id="KW-0963">Cytoplasm</keyword>
<keyword id="KW-0378">Hydrolase</keyword>
<keyword id="KW-0645">Protease</keyword>
<keyword id="KW-1185">Reference proteome</keyword>
<keyword id="KW-0720">Serine protease</keyword>
<proteinExistence type="inferred from homology"/>
<sequence>MFIPYVIEKSSRGERSYDIYSRLLKDRIIMLSGEIHDELAASIVAQLLFLEAEDPTKDIYLYINSPGGVITSGFSIYDTMNYIKPDVCTICIGQAASMGAFLLSCGAEGKRFALPNSRIMIHQPLGGARGQATDIEIQAKEILRLKTILNDILAKNTKQKVAKIAKDTERDFFMSAQEAKEYGLIDKVLEKSFK</sequence>